<gene>
    <name type="primary">VHA-A</name>
    <name type="ordered locus">At1g78900</name>
    <name type="ORF">F9K20.5</name>
</gene>
<organism>
    <name type="scientific">Arabidopsis thaliana</name>
    <name type="common">Mouse-ear cress</name>
    <dbReference type="NCBI Taxonomy" id="3702"/>
    <lineage>
        <taxon>Eukaryota</taxon>
        <taxon>Viridiplantae</taxon>
        <taxon>Streptophyta</taxon>
        <taxon>Embryophyta</taxon>
        <taxon>Tracheophyta</taxon>
        <taxon>Spermatophyta</taxon>
        <taxon>Magnoliopsida</taxon>
        <taxon>eudicotyledons</taxon>
        <taxon>Gunneridae</taxon>
        <taxon>Pentapetalae</taxon>
        <taxon>rosids</taxon>
        <taxon>malvids</taxon>
        <taxon>Brassicales</taxon>
        <taxon>Brassicaceae</taxon>
        <taxon>Camelineae</taxon>
        <taxon>Arabidopsis</taxon>
    </lineage>
</organism>
<protein>
    <recommendedName>
        <fullName>V-type proton ATPase catalytic subunit A</fullName>
        <shortName>V-ATPase subunit A</shortName>
        <ecNumber>7.1.2.2</ecNumber>
    </recommendedName>
    <alternativeName>
        <fullName>V-ATPase 69 kDa subunit</fullName>
    </alternativeName>
    <alternativeName>
        <fullName>Vacuolar H(+)-ATPase subunit A</fullName>
    </alternativeName>
    <alternativeName>
        <fullName>Vacuolar proton pump subunit alpha</fullName>
    </alternativeName>
</protein>
<proteinExistence type="evidence at protein level"/>
<keyword id="KW-0067">ATP-binding</keyword>
<keyword id="KW-0375">Hydrogen ion transport</keyword>
<keyword id="KW-0406">Ion transport</keyword>
<keyword id="KW-0472">Membrane</keyword>
<keyword id="KW-0547">Nucleotide-binding</keyword>
<keyword id="KW-1185">Reference proteome</keyword>
<keyword id="KW-1278">Translocase</keyword>
<keyword id="KW-0813">Transport</keyword>
<keyword id="KW-0926">Vacuole</keyword>
<evidence type="ECO:0000255" key="1"/>
<evidence type="ECO:0000269" key="2">
    <source>
    </source>
</evidence>
<evidence type="ECO:0000305" key="3"/>
<comment type="function">
    <text>Catalytic subunit of the peripheral V1 complex of vacuolar ATPase. V-ATPase vacuolar ATPase is responsible for acidifying a variety of intracellular compartments in eukaryotic cells.</text>
</comment>
<comment type="catalytic activity">
    <reaction>
        <text>ATP + H2O + 4 H(+)(in) = ADP + phosphate + 5 H(+)(out)</text>
        <dbReference type="Rhea" id="RHEA:57720"/>
        <dbReference type="ChEBI" id="CHEBI:15377"/>
        <dbReference type="ChEBI" id="CHEBI:15378"/>
        <dbReference type="ChEBI" id="CHEBI:30616"/>
        <dbReference type="ChEBI" id="CHEBI:43474"/>
        <dbReference type="ChEBI" id="CHEBI:456216"/>
        <dbReference type="EC" id="7.1.2.2"/>
    </reaction>
</comment>
<comment type="subunit">
    <text>V-ATPase is a heteromultimeric enzyme composed of a peripheral catalytic V1 complex (components A to H) attached to an integral membrane V0 proton pore complex (components: a, c, c'', d and e). Binds to the deubiquitinating enzyme AMSH3.</text>
</comment>
<comment type="subcellular location">
    <subcellularLocation>
        <location evidence="2">Vacuole membrane</location>
        <topology evidence="3">Peripheral membrane protein</topology>
    </subcellularLocation>
</comment>
<comment type="similarity">
    <text evidence="3">Belongs to the ATPase alpha/beta chains family.</text>
</comment>
<dbReference type="EC" id="7.1.2.2"/>
<dbReference type="EMBL" id="U65638">
    <property type="protein sequence ID" value="AAB97128.1"/>
    <property type="molecule type" value="mRNA"/>
</dbReference>
<dbReference type="EMBL" id="AC005679">
    <property type="protein sequence ID" value="AAC83021.1"/>
    <property type="molecule type" value="Genomic_DNA"/>
</dbReference>
<dbReference type="EMBL" id="CP002684">
    <property type="protein sequence ID" value="AEE36171.1"/>
    <property type="molecule type" value="Genomic_DNA"/>
</dbReference>
<dbReference type="EMBL" id="CP002684">
    <property type="protein sequence ID" value="AEE36172.1"/>
    <property type="molecule type" value="Genomic_DNA"/>
</dbReference>
<dbReference type="EMBL" id="AY059909">
    <property type="protein sequence ID" value="AAL24391.1"/>
    <property type="molecule type" value="mRNA"/>
</dbReference>
<dbReference type="EMBL" id="AY081296">
    <property type="protein sequence ID" value="AAL91185.1"/>
    <property type="molecule type" value="mRNA"/>
</dbReference>
<dbReference type="EMBL" id="BT002589">
    <property type="protein sequence ID" value="AAO00949.1"/>
    <property type="molecule type" value="mRNA"/>
</dbReference>
<dbReference type="EMBL" id="BT008383">
    <property type="protein sequence ID" value="AAP37742.1"/>
    <property type="molecule type" value="mRNA"/>
</dbReference>
<dbReference type="EMBL" id="AY085759">
    <property type="protein sequence ID" value="AAM62977.1"/>
    <property type="molecule type" value="mRNA"/>
</dbReference>
<dbReference type="PIR" id="E96818">
    <property type="entry name" value="E96818"/>
</dbReference>
<dbReference type="RefSeq" id="NP_001031299.1">
    <property type="nucleotide sequence ID" value="NM_001036222.3"/>
</dbReference>
<dbReference type="RefSeq" id="NP_178011.1">
    <property type="nucleotide sequence ID" value="NM_106539.6"/>
</dbReference>
<dbReference type="SMR" id="O23654"/>
<dbReference type="BioGRID" id="29447">
    <property type="interactions" value="19"/>
</dbReference>
<dbReference type="FunCoup" id="O23654">
    <property type="interactions" value="3709"/>
</dbReference>
<dbReference type="IntAct" id="O23654">
    <property type="interactions" value="4"/>
</dbReference>
<dbReference type="MINT" id="O23654"/>
<dbReference type="STRING" id="3702.O23654"/>
<dbReference type="TCDB" id="3.A.2.2.5">
    <property type="family name" value="the h+- or na+-translocating f-type, v-type and a-type atpase (f-atpase) superfamily"/>
</dbReference>
<dbReference type="iPTMnet" id="O23654"/>
<dbReference type="MetOSite" id="O23654"/>
<dbReference type="PaxDb" id="3702-AT1G78900.2"/>
<dbReference type="ProteomicsDB" id="243261"/>
<dbReference type="EnsemblPlants" id="AT1G78900.1">
    <property type="protein sequence ID" value="AT1G78900.1"/>
    <property type="gene ID" value="AT1G78900"/>
</dbReference>
<dbReference type="EnsemblPlants" id="AT1G78900.2">
    <property type="protein sequence ID" value="AT1G78900.2"/>
    <property type="gene ID" value="AT1G78900"/>
</dbReference>
<dbReference type="GeneID" id="844228"/>
<dbReference type="Gramene" id="AT1G78900.1">
    <property type="protein sequence ID" value="AT1G78900.1"/>
    <property type="gene ID" value="AT1G78900"/>
</dbReference>
<dbReference type="Gramene" id="AT1G78900.2">
    <property type="protein sequence ID" value="AT1G78900.2"/>
    <property type="gene ID" value="AT1G78900"/>
</dbReference>
<dbReference type="KEGG" id="ath:AT1G78900"/>
<dbReference type="Araport" id="AT1G78900"/>
<dbReference type="TAIR" id="AT1G78900">
    <property type="gene designation" value="VHA-A"/>
</dbReference>
<dbReference type="eggNOG" id="KOG1352">
    <property type="taxonomic scope" value="Eukaryota"/>
</dbReference>
<dbReference type="HOGENOM" id="CLU_008162_3_1_1"/>
<dbReference type="InParanoid" id="O23654"/>
<dbReference type="OMA" id="RIVKTFW"/>
<dbReference type="OrthoDB" id="812144at2759"/>
<dbReference type="PhylomeDB" id="O23654"/>
<dbReference type="BioCyc" id="ARA:AT1G78900-MONOMER"/>
<dbReference type="CD-CODE" id="4299E36E">
    <property type="entry name" value="Nucleolus"/>
</dbReference>
<dbReference type="PRO" id="PR:O23654"/>
<dbReference type="Proteomes" id="UP000006548">
    <property type="component" value="Chromosome 1"/>
</dbReference>
<dbReference type="ExpressionAtlas" id="O23654">
    <property type="expression patterns" value="baseline and differential"/>
</dbReference>
<dbReference type="GO" id="GO:0009507">
    <property type="term" value="C:chloroplast"/>
    <property type="evidence" value="ECO:0007005"/>
    <property type="project" value="TAIR"/>
</dbReference>
<dbReference type="GO" id="GO:0009941">
    <property type="term" value="C:chloroplast envelope"/>
    <property type="evidence" value="ECO:0007005"/>
    <property type="project" value="TAIR"/>
</dbReference>
<dbReference type="GO" id="GO:0005829">
    <property type="term" value="C:cytosol"/>
    <property type="evidence" value="ECO:0007005"/>
    <property type="project" value="TAIR"/>
</dbReference>
<dbReference type="GO" id="GO:0005794">
    <property type="term" value="C:Golgi apparatus"/>
    <property type="evidence" value="ECO:0007005"/>
    <property type="project" value="TAIR"/>
</dbReference>
<dbReference type="GO" id="GO:0005739">
    <property type="term" value="C:mitochondrion"/>
    <property type="evidence" value="ECO:0007005"/>
    <property type="project" value="TAIR"/>
</dbReference>
<dbReference type="GO" id="GO:0009505">
    <property type="term" value="C:plant-type cell wall"/>
    <property type="evidence" value="ECO:0007005"/>
    <property type="project" value="TAIR"/>
</dbReference>
<dbReference type="GO" id="GO:0000325">
    <property type="term" value="C:plant-type vacuole"/>
    <property type="evidence" value="ECO:0007005"/>
    <property type="project" value="TAIR"/>
</dbReference>
<dbReference type="GO" id="GO:0005886">
    <property type="term" value="C:plasma membrane"/>
    <property type="evidence" value="ECO:0007005"/>
    <property type="project" value="TAIR"/>
</dbReference>
<dbReference type="GO" id="GO:0009506">
    <property type="term" value="C:plasmodesma"/>
    <property type="evidence" value="ECO:0007005"/>
    <property type="project" value="TAIR"/>
</dbReference>
<dbReference type="GO" id="GO:0033180">
    <property type="term" value="C:proton-transporting V-type ATPase, V1 domain"/>
    <property type="evidence" value="ECO:0007669"/>
    <property type="project" value="InterPro"/>
</dbReference>
<dbReference type="GO" id="GO:0005774">
    <property type="term" value="C:vacuolar membrane"/>
    <property type="evidence" value="ECO:0007005"/>
    <property type="project" value="TAIR"/>
</dbReference>
<dbReference type="GO" id="GO:0005773">
    <property type="term" value="C:vacuole"/>
    <property type="evidence" value="ECO:0007005"/>
    <property type="project" value="TAIR"/>
</dbReference>
<dbReference type="GO" id="GO:0005524">
    <property type="term" value="F:ATP binding"/>
    <property type="evidence" value="ECO:0007669"/>
    <property type="project" value="UniProtKB-KW"/>
</dbReference>
<dbReference type="GO" id="GO:0016887">
    <property type="term" value="F:ATP hydrolysis activity"/>
    <property type="evidence" value="ECO:0007669"/>
    <property type="project" value="InterPro"/>
</dbReference>
<dbReference type="GO" id="GO:0002020">
    <property type="term" value="F:protease binding"/>
    <property type="evidence" value="ECO:0000353"/>
    <property type="project" value="UniProtKB"/>
</dbReference>
<dbReference type="GO" id="GO:0046961">
    <property type="term" value="F:proton-transporting ATPase activity, rotational mechanism"/>
    <property type="evidence" value="ECO:0007669"/>
    <property type="project" value="InterPro"/>
</dbReference>
<dbReference type="GO" id="GO:0046034">
    <property type="term" value="P:ATP metabolic process"/>
    <property type="evidence" value="ECO:0007669"/>
    <property type="project" value="InterPro"/>
</dbReference>
<dbReference type="GO" id="GO:0007030">
    <property type="term" value="P:Golgi organization"/>
    <property type="evidence" value="ECO:0000315"/>
    <property type="project" value="TAIR"/>
</dbReference>
<dbReference type="GO" id="GO:0009555">
    <property type="term" value="P:pollen development"/>
    <property type="evidence" value="ECO:0000315"/>
    <property type="project" value="TAIR"/>
</dbReference>
<dbReference type="CDD" id="cd18111">
    <property type="entry name" value="ATP-synt_V_A-type_alpha_C"/>
    <property type="match status" value="1"/>
</dbReference>
<dbReference type="CDD" id="cd18119">
    <property type="entry name" value="ATP-synt_V_A-type_alpha_N"/>
    <property type="match status" value="1"/>
</dbReference>
<dbReference type="CDD" id="cd01134">
    <property type="entry name" value="V_A-ATPase_A"/>
    <property type="match status" value="1"/>
</dbReference>
<dbReference type="FunFam" id="1.10.1140.10:FF:000002">
    <property type="entry name" value="V-type proton ATPase catalytic subunit A"/>
    <property type="match status" value="1"/>
</dbReference>
<dbReference type="FunFam" id="2.40.30.20:FF:000002">
    <property type="entry name" value="V-type proton ATPase catalytic subunit A"/>
    <property type="match status" value="1"/>
</dbReference>
<dbReference type="FunFam" id="2.40.50.100:FF:000008">
    <property type="entry name" value="V-type proton ATPase catalytic subunit A"/>
    <property type="match status" value="1"/>
</dbReference>
<dbReference type="FunFam" id="3.40.50.300:FF:000052">
    <property type="entry name" value="V-type proton ATPase catalytic subunit A"/>
    <property type="match status" value="1"/>
</dbReference>
<dbReference type="Gene3D" id="2.40.30.20">
    <property type="match status" value="1"/>
</dbReference>
<dbReference type="Gene3D" id="2.40.50.100">
    <property type="match status" value="1"/>
</dbReference>
<dbReference type="Gene3D" id="1.10.1140.10">
    <property type="entry name" value="Bovine Mitochondrial F1-atpase, Atp Synthase Beta Chain, Chain D, domain 3"/>
    <property type="match status" value="1"/>
</dbReference>
<dbReference type="Gene3D" id="3.40.50.300">
    <property type="entry name" value="P-loop containing nucleotide triphosphate hydrolases"/>
    <property type="match status" value="1"/>
</dbReference>
<dbReference type="HAMAP" id="MF_00309">
    <property type="entry name" value="ATP_synth_A_arch"/>
    <property type="match status" value="1"/>
</dbReference>
<dbReference type="InterPro" id="IPR055190">
    <property type="entry name" value="ATP-synt_VA_C"/>
</dbReference>
<dbReference type="InterPro" id="IPR031686">
    <property type="entry name" value="ATP-synth_a_Xtn"/>
</dbReference>
<dbReference type="InterPro" id="IPR023366">
    <property type="entry name" value="ATP_synth_asu-like_sf"/>
</dbReference>
<dbReference type="InterPro" id="IPR020003">
    <property type="entry name" value="ATPase_a/bsu_AS"/>
</dbReference>
<dbReference type="InterPro" id="IPR004100">
    <property type="entry name" value="ATPase_F1/V1/A1_a/bsu_N"/>
</dbReference>
<dbReference type="InterPro" id="IPR036121">
    <property type="entry name" value="ATPase_F1/V1/A1_a/bsu_N_sf"/>
</dbReference>
<dbReference type="InterPro" id="IPR000194">
    <property type="entry name" value="ATPase_F1/V1/A1_a/bsu_nucl-bd"/>
</dbReference>
<dbReference type="InterPro" id="IPR024034">
    <property type="entry name" value="ATPase_F1/V1_b/a_C"/>
</dbReference>
<dbReference type="InterPro" id="IPR005725">
    <property type="entry name" value="ATPase_V1-cplx_asu"/>
</dbReference>
<dbReference type="InterPro" id="IPR027417">
    <property type="entry name" value="P-loop_NTPase"/>
</dbReference>
<dbReference type="InterPro" id="IPR022878">
    <property type="entry name" value="V-ATPase_asu"/>
</dbReference>
<dbReference type="NCBIfam" id="NF003220">
    <property type="entry name" value="PRK04192.1"/>
    <property type="match status" value="1"/>
</dbReference>
<dbReference type="NCBIfam" id="TIGR01042">
    <property type="entry name" value="V-ATPase_V1_A"/>
    <property type="match status" value="1"/>
</dbReference>
<dbReference type="PANTHER" id="PTHR43607:SF1">
    <property type="entry name" value="H(+)-TRANSPORTING TWO-SECTOR ATPASE"/>
    <property type="match status" value="1"/>
</dbReference>
<dbReference type="PANTHER" id="PTHR43607">
    <property type="entry name" value="V-TYPE PROTON ATPASE CATALYTIC SUBUNIT A"/>
    <property type="match status" value="1"/>
</dbReference>
<dbReference type="Pfam" id="PF00006">
    <property type="entry name" value="ATP-synt_ab"/>
    <property type="match status" value="1"/>
</dbReference>
<dbReference type="Pfam" id="PF02874">
    <property type="entry name" value="ATP-synt_ab_N"/>
    <property type="match status" value="1"/>
</dbReference>
<dbReference type="Pfam" id="PF16886">
    <property type="entry name" value="ATP-synt_ab_Xtn"/>
    <property type="match status" value="1"/>
</dbReference>
<dbReference type="Pfam" id="PF22919">
    <property type="entry name" value="ATP-synt_VA_C"/>
    <property type="match status" value="1"/>
</dbReference>
<dbReference type="SUPFAM" id="SSF47917">
    <property type="entry name" value="C-terminal domain of alpha and beta subunits of F1 ATP synthase"/>
    <property type="match status" value="1"/>
</dbReference>
<dbReference type="SUPFAM" id="SSF50615">
    <property type="entry name" value="N-terminal domain of alpha and beta subunits of F1 ATP synthase"/>
    <property type="match status" value="1"/>
</dbReference>
<dbReference type="SUPFAM" id="SSF52540">
    <property type="entry name" value="P-loop containing nucleoside triphosphate hydrolases"/>
    <property type="match status" value="1"/>
</dbReference>
<dbReference type="PROSITE" id="PS00152">
    <property type="entry name" value="ATPASE_ALPHA_BETA"/>
    <property type="match status" value="1"/>
</dbReference>
<reference key="1">
    <citation type="online journal article" date="1997" name="Plant Gene Register">
        <title>Characterization and isolation of a vacuolar type H+-ATPase subunit a cDNA from Arabidopsis thaliana.</title>
        <authorList>
            <person name="Magnotta S.M."/>
            <person name="Gogarten J.P."/>
        </authorList>
        <locator>PGR97-177</locator>
    </citation>
    <scope>NUCLEOTIDE SEQUENCE [MRNA]</scope>
    <source>
        <strain>cv. Columbia</strain>
    </source>
</reference>
<reference key="2">
    <citation type="journal article" date="2000" name="Nature">
        <title>Sequence and analysis of chromosome 1 of the plant Arabidopsis thaliana.</title>
        <authorList>
            <person name="Theologis A."/>
            <person name="Ecker J.R."/>
            <person name="Palm C.J."/>
            <person name="Federspiel N.A."/>
            <person name="Kaul S."/>
            <person name="White O."/>
            <person name="Alonso J."/>
            <person name="Altafi H."/>
            <person name="Araujo R."/>
            <person name="Bowman C.L."/>
            <person name="Brooks S.Y."/>
            <person name="Buehler E."/>
            <person name="Chan A."/>
            <person name="Chao Q."/>
            <person name="Chen H."/>
            <person name="Cheuk R.F."/>
            <person name="Chin C.W."/>
            <person name="Chung M.K."/>
            <person name="Conn L."/>
            <person name="Conway A.B."/>
            <person name="Conway A.R."/>
            <person name="Creasy T.H."/>
            <person name="Dewar K."/>
            <person name="Dunn P."/>
            <person name="Etgu P."/>
            <person name="Feldblyum T.V."/>
            <person name="Feng J.-D."/>
            <person name="Fong B."/>
            <person name="Fujii C.Y."/>
            <person name="Gill J.E."/>
            <person name="Goldsmith A.D."/>
            <person name="Haas B."/>
            <person name="Hansen N.F."/>
            <person name="Hughes B."/>
            <person name="Huizar L."/>
            <person name="Hunter J.L."/>
            <person name="Jenkins J."/>
            <person name="Johnson-Hopson C."/>
            <person name="Khan S."/>
            <person name="Khaykin E."/>
            <person name="Kim C.J."/>
            <person name="Koo H.L."/>
            <person name="Kremenetskaia I."/>
            <person name="Kurtz D.B."/>
            <person name="Kwan A."/>
            <person name="Lam B."/>
            <person name="Langin-Hooper S."/>
            <person name="Lee A."/>
            <person name="Lee J.M."/>
            <person name="Lenz C.A."/>
            <person name="Li J.H."/>
            <person name="Li Y.-P."/>
            <person name="Lin X."/>
            <person name="Liu S.X."/>
            <person name="Liu Z.A."/>
            <person name="Luros J.S."/>
            <person name="Maiti R."/>
            <person name="Marziali A."/>
            <person name="Militscher J."/>
            <person name="Miranda M."/>
            <person name="Nguyen M."/>
            <person name="Nierman W.C."/>
            <person name="Osborne B.I."/>
            <person name="Pai G."/>
            <person name="Peterson J."/>
            <person name="Pham P.K."/>
            <person name="Rizzo M."/>
            <person name="Rooney T."/>
            <person name="Rowley D."/>
            <person name="Sakano H."/>
            <person name="Salzberg S.L."/>
            <person name="Schwartz J.R."/>
            <person name="Shinn P."/>
            <person name="Southwick A.M."/>
            <person name="Sun H."/>
            <person name="Tallon L.J."/>
            <person name="Tambunga G."/>
            <person name="Toriumi M.J."/>
            <person name="Town C.D."/>
            <person name="Utterback T."/>
            <person name="Van Aken S."/>
            <person name="Vaysberg M."/>
            <person name="Vysotskaia V.S."/>
            <person name="Walker M."/>
            <person name="Wu D."/>
            <person name="Yu G."/>
            <person name="Fraser C.M."/>
            <person name="Venter J.C."/>
            <person name="Davis R.W."/>
        </authorList>
    </citation>
    <scope>NUCLEOTIDE SEQUENCE [LARGE SCALE GENOMIC DNA]</scope>
    <source>
        <strain>cv. Columbia</strain>
    </source>
</reference>
<reference key="3">
    <citation type="journal article" date="2017" name="Plant J.">
        <title>Araport11: a complete reannotation of the Arabidopsis thaliana reference genome.</title>
        <authorList>
            <person name="Cheng C.Y."/>
            <person name="Krishnakumar V."/>
            <person name="Chan A.P."/>
            <person name="Thibaud-Nissen F."/>
            <person name="Schobel S."/>
            <person name="Town C.D."/>
        </authorList>
    </citation>
    <scope>GENOME REANNOTATION</scope>
    <source>
        <strain>cv. Columbia</strain>
    </source>
</reference>
<reference key="4">
    <citation type="journal article" date="2003" name="Science">
        <title>Empirical analysis of transcriptional activity in the Arabidopsis genome.</title>
        <authorList>
            <person name="Yamada K."/>
            <person name="Lim J."/>
            <person name="Dale J.M."/>
            <person name="Chen H."/>
            <person name="Shinn P."/>
            <person name="Palm C.J."/>
            <person name="Southwick A.M."/>
            <person name="Wu H.C."/>
            <person name="Kim C.J."/>
            <person name="Nguyen M."/>
            <person name="Pham P.K."/>
            <person name="Cheuk R.F."/>
            <person name="Karlin-Newmann G."/>
            <person name="Liu S.X."/>
            <person name="Lam B."/>
            <person name="Sakano H."/>
            <person name="Wu T."/>
            <person name="Yu G."/>
            <person name="Miranda M."/>
            <person name="Quach H.L."/>
            <person name="Tripp M."/>
            <person name="Chang C.H."/>
            <person name="Lee J.M."/>
            <person name="Toriumi M.J."/>
            <person name="Chan M.M."/>
            <person name="Tang C.C."/>
            <person name="Onodera C.S."/>
            <person name="Deng J.M."/>
            <person name="Akiyama K."/>
            <person name="Ansari Y."/>
            <person name="Arakawa T."/>
            <person name="Banh J."/>
            <person name="Banno F."/>
            <person name="Bowser L."/>
            <person name="Brooks S.Y."/>
            <person name="Carninci P."/>
            <person name="Chao Q."/>
            <person name="Choy N."/>
            <person name="Enju A."/>
            <person name="Goldsmith A.D."/>
            <person name="Gurjal M."/>
            <person name="Hansen N.F."/>
            <person name="Hayashizaki Y."/>
            <person name="Johnson-Hopson C."/>
            <person name="Hsuan V.W."/>
            <person name="Iida K."/>
            <person name="Karnes M."/>
            <person name="Khan S."/>
            <person name="Koesema E."/>
            <person name="Ishida J."/>
            <person name="Jiang P.X."/>
            <person name="Jones T."/>
            <person name="Kawai J."/>
            <person name="Kamiya A."/>
            <person name="Meyers C."/>
            <person name="Nakajima M."/>
            <person name="Narusaka M."/>
            <person name="Seki M."/>
            <person name="Sakurai T."/>
            <person name="Satou M."/>
            <person name="Tamse R."/>
            <person name="Vaysberg M."/>
            <person name="Wallender E.K."/>
            <person name="Wong C."/>
            <person name="Yamamura Y."/>
            <person name="Yuan S."/>
            <person name="Shinozaki K."/>
            <person name="Davis R.W."/>
            <person name="Theologis A."/>
            <person name="Ecker J.R."/>
        </authorList>
    </citation>
    <scope>NUCLEOTIDE SEQUENCE [LARGE SCALE MRNA]</scope>
    <source>
        <strain>cv. Columbia</strain>
    </source>
</reference>
<reference key="5">
    <citation type="submission" date="2002-03" db="EMBL/GenBank/DDBJ databases">
        <title>Full-length cDNA from Arabidopsis thaliana.</title>
        <authorList>
            <person name="Brover V.V."/>
            <person name="Troukhan M.E."/>
            <person name="Alexandrov N.A."/>
            <person name="Lu Y.-P."/>
            <person name="Flavell R.B."/>
            <person name="Feldmann K.A."/>
        </authorList>
    </citation>
    <scope>NUCLEOTIDE SEQUENCE [LARGE SCALE MRNA]</scope>
</reference>
<reference key="6">
    <citation type="journal article" date="2002" name="Trends Plant Sci.">
        <title>A simple nomenclature for a complex proton pump: VHA genes encode the vacuolar H(+)-ATPase.</title>
        <authorList>
            <person name="Sze H."/>
            <person name="Schumacher K."/>
            <person name="Mueller M.L."/>
            <person name="Padmanaban S."/>
            <person name="Taiz L."/>
        </authorList>
    </citation>
    <scope>GENE FAMILY</scope>
    <scope>NOMENCLATURE</scope>
</reference>
<reference key="7">
    <citation type="journal article" date="2007" name="Mol. Cell. Proteomics">
        <title>A proteomics dissection of Arabidopsis thaliana vacuoles isolated from cell culture.</title>
        <authorList>
            <person name="Jaquinod M."/>
            <person name="Villiers F."/>
            <person name="Kieffer-Jaquinod S."/>
            <person name="Hugouvieux V."/>
            <person name="Bruley C."/>
            <person name="Garin J."/>
            <person name="Bourguignon J."/>
        </authorList>
    </citation>
    <scope>IDENTIFICATION BY MASS SPECTROMETRY</scope>
    <scope>SUBCELLULAR LOCATION [LARGE SCALE ANALYSIS]</scope>
</reference>
<reference key="8">
    <citation type="journal article" date="2007" name="Mol. Cell. Proteomics">
        <title>Multidimensional protein identification technology (MudPIT) analysis of ubiquitinated proteins in plants.</title>
        <authorList>
            <person name="Maor R."/>
            <person name="Jones A."/>
            <person name="Nuehse T.S."/>
            <person name="Studholme D.J."/>
            <person name="Peck S.C."/>
            <person name="Shirasu K."/>
        </authorList>
    </citation>
    <scope>IDENTIFICATION BY MASS SPECTROMETRY [LARGE SCALE ANALYSIS]</scope>
    <source>
        <strain>cv. Landsberg erecta</strain>
    </source>
</reference>
<reference key="9">
    <citation type="journal article" date="2010" name="Plant Cell">
        <title>The deubiquitinating enzyme AMSH3 is required for intracellular trafficking and vacuole biogenesis in Arabidopsis thaliana.</title>
        <authorList>
            <person name="Isono E."/>
            <person name="Katsiarimpa A."/>
            <person name="Mueller I.K."/>
            <person name="Anzenberger F."/>
            <person name="Stierhof Y.-D."/>
            <person name="Geldner N."/>
            <person name="Chory J."/>
            <person name="Schwechheimer C."/>
        </authorList>
    </citation>
    <scope>INTERACTION WITH AMSH3</scope>
</reference>
<sequence>MPAFYGGKLTTFEDDEKESEYGYVRKVSGPVVVADGMAGAAMYELVRVGHDNLIGEIIRLEGDSATIQVYEETAGLTVNDPVLRTHKPLSVELGPGILGNIFDGIQRPLKTIARISGDVYIPRGVSVPALDKDCLWEFQPNKFVEGDTITGGDLYATVFENTLMNHLVALPPDAMGKITYIAPAGQYSLKDTVIELEFQGIKKSYTMLQSWPVRTPRPVASKLAADTPLLTGQRVLDALFPSVLGGTCAIPGAFGCGKTVISQALSKYSNSDAVVYVGCGERGNEMAEVLMDFPQLTMTLPDGREESVMKRTTLVANTSNMPVAAREASIYTGITIAEYFRDMGYNVSMMADSTSRWAEALREISGRLAEMPADSGYPAYLAARLASFYERAGKVKCLGGPERNGSVTIVGAVSPPGGDFSDPVTSATLSIVQVFWGLDKKLAQRKHFPSVNWLISYSKYSTALESFYEKFDPDFINIRTKAREVLQREDDLNEIVQLVGKDALAEGDKITLETAKLLREDYLAQNAFTPYDKFCPFYKSVWMMRNIIHFYNLANQAVERAAGMDGQKITYTLIKHRLGDLFYRLVSQKFEDPAEGEDTLVEKFKKLYDDLNAGFRALEDETR</sequence>
<name>VATA_ARATH</name>
<accession>O23654</accession>
<feature type="chain" id="PRO_0000144574" description="V-type proton ATPase catalytic subunit A">
    <location>
        <begin position="1"/>
        <end position="623"/>
    </location>
</feature>
<feature type="binding site" evidence="1">
    <location>
        <begin position="252"/>
        <end position="259"/>
    </location>
    <ligand>
        <name>ATP</name>
        <dbReference type="ChEBI" id="CHEBI:30616"/>
    </ligand>
</feature>